<evidence type="ECO:0000250" key="1"/>
<evidence type="ECO:0000305" key="2"/>
<keyword id="KW-0903">Direct protein sequencing</keyword>
<keyword id="KW-0255">Endonuclease</keyword>
<keyword id="KW-0378">Hydrolase</keyword>
<keyword id="KW-0540">Nuclease</keyword>
<keyword id="KW-0964">Secreted</keyword>
<protein>
    <recommendedName>
        <fullName>Ribonuclease</fullName>
        <ecNumber>3.1.27.-</ecNumber>
    </recommendedName>
    <alternativeName>
        <fullName>RNase Bci</fullName>
    </alternativeName>
</protein>
<name>RN_NIACI</name>
<proteinExistence type="evidence at protein level"/>
<accession>P35078</accession>
<accession>Q45109</accession>
<comment type="function">
    <text>Hydrolyzes phosphodiester bonds in RNA, poly- and oligoribonucleotides resulting in 3'-nucleoside monophosphates via 2',3'-cyclophosphate intermediates.</text>
</comment>
<comment type="subcellular location">
    <subcellularLocation>
        <location>Secreted</location>
    </subcellularLocation>
</comment>
<comment type="similarity">
    <text evidence="2">Belongs to the ribonuclease N1/T1 family.</text>
</comment>
<dbReference type="EC" id="3.1.27.-"/>
<dbReference type="EMBL" id="Z29626">
    <property type="protein sequence ID" value="CAA82734.1"/>
    <property type="molecule type" value="Genomic_DNA"/>
</dbReference>
<dbReference type="PIR" id="S38944">
    <property type="entry name" value="S38944"/>
</dbReference>
<dbReference type="BMRB" id="P35078"/>
<dbReference type="SMR" id="P35078"/>
<dbReference type="GO" id="GO:0005576">
    <property type="term" value="C:extracellular region"/>
    <property type="evidence" value="ECO:0007669"/>
    <property type="project" value="UniProtKB-SubCell"/>
</dbReference>
<dbReference type="GO" id="GO:0003723">
    <property type="term" value="F:RNA binding"/>
    <property type="evidence" value="ECO:0007669"/>
    <property type="project" value="InterPro"/>
</dbReference>
<dbReference type="GO" id="GO:0004521">
    <property type="term" value="F:RNA endonuclease activity"/>
    <property type="evidence" value="ECO:0007669"/>
    <property type="project" value="InterPro"/>
</dbReference>
<dbReference type="CDD" id="cd00933">
    <property type="entry name" value="barnase"/>
    <property type="match status" value="1"/>
</dbReference>
<dbReference type="Gene3D" id="3.10.450.30">
    <property type="entry name" value="Microbial ribonucleases"/>
    <property type="match status" value="1"/>
</dbReference>
<dbReference type="InterPro" id="IPR001887">
    <property type="entry name" value="Barnase"/>
</dbReference>
<dbReference type="InterPro" id="IPR000026">
    <property type="entry name" value="N1-like"/>
</dbReference>
<dbReference type="InterPro" id="IPR016191">
    <property type="entry name" value="Ribonuclease/ribotoxin"/>
</dbReference>
<dbReference type="Pfam" id="PF00545">
    <property type="entry name" value="Ribonuclease"/>
    <property type="match status" value="1"/>
</dbReference>
<dbReference type="PIRSF" id="PIRSF001013">
    <property type="entry name" value="Barnase"/>
    <property type="match status" value="1"/>
</dbReference>
<dbReference type="PRINTS" id="PR00117">
    <property type="entry name" value="BARNASE"/>
</dbReference>
<dbReference type="SUPFAM" id="SSF53933">
    <property type="entry name" value="Microbial ribonucleases"/>
    <property type="match status" value="1"/>
</dbReference>
<sequence>AQVINTFDGVADYLLTYHKLPDNYITKSEAQALGWVASKGNLADVAPGKSIGGDIFSNREGKLPAKSGRTWREADINYTSGFRNSDRILYSSDWLIYKTTDHYKTFTKIR</sequence>
<reference key="1">
    <citation type="journal article" date="1993" name="FEBS Lett.">
        <title>Primary structure and catalytic properties of extracellular ribonuclease of Bacillus circulans.</title>
        <authorList>
            <person name="Dementiev A.A."/>
            <person name="Moiseyev G.P."/>
            <person name="Shlyapnikov S.V."/>
        </authorList>
    </citation>
    <scope>PROTEIN SEQUENCE</scope>
    <source>
        <strain>BCF 247</strain>
    </source>
</reference>
<reference key="2">
    <citation type="journal article" date="1994" name="Mol. Biol. (Mosk.)">
        <title>Cloning of the gene for extracellular Bacillus circulans RNAase.</title>
        <authorList>
            <person name="Fedorova N.D."/>
            <person name="Schulga A.A."/>
            <person name="Peredelchuk M.Y.U."/>
            <person name="Kozharinova L.V."/>
            <person name="Golyshin P.N."/>
            <person name="Ryabchenko N.F."/>
            <person name="Kirpichnikov M.P."/>
        </authorList>
    </citation>
    <scope>NUCLEOTIDE SEQUENCE [GENOMIC DNA]</scope>
</reference>
<feature type="chain" id="PRO_0000137365" description="Ribonuclease">
    <location>
        <begin position="1"/>
        <end position="110"/>
    </location>
</feature>
<feature type="active site" description="Proton acceptor" evidence="1">
    <location>
        <position position="73"/>
    </location>
</feature>
<feature type="active site" description="Proton donor" evidence="1">
    <location>
        <position position="102"/>
    </location>
</feature>
<feature type="sequence conflict" description="In Ref. 2; CAA82734." evidence="2" ref="2">
    <original>D</original>
    <variation>H</variation>
    <location>
        <position position="101"/>
    </location>
</feature>
<organism>
    <name type="scientific">Niallia circulans</name>
    <name type="common">Bacillus circulans</name>
    <dbReference type="NCBI Taxonomy" id="1397"/>
    <lineage>
        <taxon>Bacteria</taxon>
        <taxon>Bacillati</taxon>
        <taxon>Bacillota</taxon>
        <taxon>Bacilli</taxon>
        <taxon>Bacillales</taxon>
        <taxon>Bacillaceae</taxon>
        <taxon>Niallia</taxon>
    </lineage>
</organism>